<feature type="chain" id="PRO_0000287030" description="Cyclin-D4-2">
    <location>
        <begin position="1"/>
        <end position="298"/>
    </location>
</feature>
<feature type="sequence conflict" description="In Ref. 4; BAF00560." evidence="2" ref="4">
    <original>A</original>
    <variation>T</variation>
    <location>
        <position position="223"/>
    </location>
</feature>
<accession>Q0WQN9</accession>
<accession>Q6NKU1</accession>
<accession>Q9LX96</accession>
<sequence>MAEFMEPNLVSNFDDEKSNSVDTRSIFQMGFPLESEEIVREMIEKERQHSPRDDYLKRLRNGDLDFNVRIQALGWIWKACEELQFGPLCICLAMNYLDRFLSVHDLPSGKAWTVQLLAVACLSLAAKIEETNVPELMQLQVGAPMFVFEAKSVQRMELLVLNVLRWRLRAVTPCSYVRYFLSKINGYDQEPHSRLVTRSLQVIASTTKGIDFLEFRASEIAAAVALSVSGEHFDKFSFSSSFSSLEKERVKKIGEMIERDGSSSSSQTPNNTVLQFKSRRYSHSLSTASVSSSLTSLS</sequence>
<protein>
    <recommendedName>
        <fullName>Cyclin-D4-2</fullName>
    </recommendedName>
    <alternativeName>
        <fullName>G1/S-specific cyclin-D4-2</fullName>
        <shortName>CycD4;2</shortName>
    </alternativeName>
</protein>
<gene>
    <name type="primary">CYCD4-2</name>
    <name type="ordered locus">At5g10440</name>
    <name type="ORF">F12B17.210</name>
</gene>
<dbReference type="EMBL" id="AL353995">
    <property type="protein sequence ID" value="CAB89399.1"/>
    <property type="status" value="ALT_SEQ"/>
    <property type="molecule type" value="Genomic_DNA"/>
</dbReference>
<dbReference type="EMBL" id="CP002688">
    <property type="protein sequence ID" value="AED91540.1"/>
    <property type="molecule type" value="Genomic_DNA"/>
</dbReference>
<dbReference type="EMBL" id="BT012602">
    <property type="protein sequence ID" value="AAT06421.1"/>
    <property type="molecule type" value="mRNA"/>
</dbReference>
<dbReference type="EMBL" id="BT014959">
    <property type="protein sequence ID" value="AAT47810.1"/>
    <property type="molecule type" value="mRNA"/>
</dbReference>
<dbReference type="EMBL" id="AK228653">
    <property type="protein sequence ID" value="BAF00560.1"/>
    <property type="molecule type" value="mRNA"/>
</dbReference>
<dbReference type="PIR" id="T49995">
    <property type="entry name" value="T49995"/>
</dbReference>
<dbReference type="RefSeq" id="NP_196606.3">
    <property type="nucleotide sequence ID" value="NM_121082.5"/>
</dbReference>
<dbReference type="SMR" id="Q0WQN9"/>
<dbReference type="BioGRID" id="16186">
    <property type="interactions" value="19"/>
</dbReference>
<dbReference type="FunCoup" id="Q0WQN9">
    <property type="interactions" value="451"/>
</dbReference>
<dbReference type="IntAct" id="Q0WQN9">
    <property type="interactions" value="9"/>
</dbReference>
<dbReference type="STRING" id="3702.Q0WQN9"/>
<dbReference type="GlyGen" id="Q0WQN9">
    <property type="glycosylation" value="1 site"/>
</dbReference>
<dbReference type="iPTMnet" id="Q0WQN9"/>
<dbReference type="PaxDb" id="3702-AT5G10440.1"/>
<dbReference type="ProteomicsDB" id="223871"/>
<dbReference type="EnsemblPlants" id="AT5G10440.1">
    <property type="protein sequence ID" value="AT5G10440.1"/>
    <property type="gene ID" value="AT5G10440"/>
</dbReference>
<dbReference type="GeneID" id="830908"/>
<dbReference type="Gramene" id="AT5G10440.1">
    <property type="protein sequence ID" value="AT5G10440.1"/>
    <property type="gene ID" value="AT5G10440"/>
</dbReference>
<dbReference type="KEGG" id="ath:AT5G10440"/>
<dbReference type="Araport" id="AT5G10440"/>
<dbReference type="TAIR" id="AT5G10440">
    <property type="gene designation" value="CYCD4"/>
</dbReference>
<dbReference type="eggNOG" id="KOG0656">
    <property type="taxonomic scope" value="Eukaryota"/>
</dbReference>
<dbReference type="HOGENOM" id="CLU_048040_1_0_1"/>
<dbReference type="InParanoid" id="Q0WQN9"/>
<dbReference type="OMA" id="TSCKYIN"/>
<dbReference type="PhylomeDB" id="Q0WQN9"/>
<dbReference type="PRO" id="PR:Q0WQN9"/>
<dbReference type="Proteomes" id="UP000006548">
    <property type="component" value="Chromosome 5"/>
</dbReference>
<dbReference type="ExpressionAtlas" id="Q0WQN9">
    <property type="expression patterns" value="baseline and differential"/>
</dbReference>
<dbReference type="GO" id="GO:0005737">
    <property type="term" value="C:cytoplasm"/>
    <property type="evidence" value="ECO:0000314"/>
    <property type="project" value="TAIR"/>
</dbReference>
<dbReference type="GO" id="GO:0005634">
    <property type="term" value="C:nucleus"/>
    <property type="evidence" value="ECO:0000314"/>
    <property type="project" value="TAIR"/>
</dbReference>
<dbReference type="GO" id="GO:0051301">
    <property type="term" value="P:cell division"/>
    <property type="evidence" value="ECO:0007669"/>
    <property type="project" value="UniProtKB-KW"/>
</dbReference>
<dbReference type="GO" id="GO:0010440">
    <property type="term" value="P:stomatal lineage progression"/>
    <property type="evidence" value="ECO:0000315"/>
    <property type="project" value="TAIR"/>
</dbReference>
<dbReference type="CDD" id="cd20543">
    <property type="entry name" value="CYCLIN_AtCycD-like_rpt1"/>
    <property type="match status" value="1"/>
</dbReference>
<dbReference type="CDD" id="cd20544">
    <property type="entry name" value="CYCLIN_AtCycD-like_rpt2"/>
    <property type="match status" value="1"/>
</dbReference>
<dbReference type="FunFam" id="1.10.472.10:FF:000040">
    <property type="entry name" value="D6-type cyclin"/>
    <property type="match status" value="1"/>
</dbReference>
<dbReference type="FunFam" id="1.10.472.10:FF:000060">
    <property type="entry name" value="D6-type cyclin"/>
    <property type="match status" value="1"/>
</dbReference>
<dbReference type="Gene3D" id="1.10.472.10">
    <property type="entry name" value="Cyclin-like"/>
    <property type="match status" value="2"/>
</dbReference>
<dbReference type="InterPro" id="IPR039361">
    <property type="entry name" value="Cyclin"/>
</dbReference>
<dbReference type="InterPro" id="IPR013763">
    <property type="entry name" value="Cyclin-like_dom"/>
</dbReference>
<dbReference type="InterPro" id="IPR036915">
    <property type="entry name" value="Cyclin-like_sf"/>
</dbReference>
<dbReference type="InterPro" id="IPR004367">
    <property type="entry name" value="Cyclin_C-dom"/>
</dbReference>
<dbReference type="InterPro" id="IPR006671">
    <property type="entry name" value="Cyclin_N"/>
</dbReference>
<dbReference type="InterPro" id="IPR048258">
    <property type="entry name" value="Cyclins_cyclin-box"/>
</dbReference>
<dbReference type="PANTHER" id="PTHR10177">
    <property type="entry name" value="CYCLINS"/>
    <property type="match status" value="1"/>
</dbReference>
<dbReference type="Pfam" id="PF02984">
    <property type="entry name" value="Cyclin_C"/>
    <property type="match status" value="1"/>
</dbReference>
<dbReference type="Pfam" id="PF00134">
    <property type="entry name" value="Cyclin_N"/>
    <property type="match status" value="1"/>
</dbReference>
<dbReference type="SMART" id="SM00385">
    <property type="entry name" value="CYCLIN"/>
    <property type="match status" value="1"/>
</dbReference>
<dbReference type="SMART" id="SM01332">
    <property type="entry name" value="Cyclin_C"/>
    <property type="match status" value="1"/>
</dbReference>
<dbReference type="SUPFAM" id="SSF47954">
    <property type="entry name" value="Cyclin-like"/>
    <property type="match status" value="1"/>
</dbReference>
<dbReference type="PROSITE" id="PS00292">
    <property type="entry name" value="CYCLINS"/>
    <property type="match status" value="1"/>
</dbReference>
<proteinExistence type="evidence at protein level"/>
<comment type="function">
    <text evidence="1">May promote cell division.</text>
</comment>
<comment type="subunit">
    <text evidence="1">Interacts with CDKA-1 to form a kinase complex.</text>
</comment>
<comment type="developmental stage">
    <text evidence="1">Expressed from the G1 to the S phase.</text>
</comment>
<comment type="similarity">
    <text evidence="2">Belongs to the cyclin family. Cyclin D subfamily.</text>
</comment>
<comment type="sequence caution" evidence="2">
    <conflict type="erroneous gene model prediction">
        <sequence resource="EMBL-CDS" id="CAB89399"/>
    </conflict>
</comment>
<keyword id="KW-0131">Cell cycle</keyword>
<keyword id="KW-0132">Cell division</keyword>
<keyword id="KW-0195">Cyclin</keyword>
<keyword id="KW-1185">Reference proteome</keyword>
<name>CCD42_ARATH</name>
<organism>
    <name type="scientific">Arabidopsis thaliana</name>
    <name type="common">Mouse-ear cress</name>
    <dbReference type="NCBI Taxonomy" id="3702"/>
    <lineage>
        <taxon>Eukaryota</taxon>
        <taxon>Viridiplantae</taxon>
        <taxon>Streptophyta</taxon>
        <taxon>Embryophyta</taxon>
        <taxon>Tracheophyta</taxon>
        <taxon>Spermatophyta</taxon>
        <taxon>Magnoliopsida</taxon>
        <taxon>eudicotyledons</taxon>
        <taxon>Gunneridae</taxon>
        <taxon>Pentapetalae</taxon>
        <taxon>rosids</taxon>
        <taxon>malvids</taxon>
        <taxon>Brassicales</taxon>
        <taxon>Brassicaceae</taxon>
        <taxon>Camelineae</taxon>
        <taxon>Arabidopsis</taxon>
    </lineage>
</organism>
<evidence type="ECO:0000269" key="1">
    <source>
    </source>
</evidence>
<evidence type="ECO:0000305" key="2"/>
<reference key="1">
    <citation type="journal article" date="2000" name="Nature">
        <title>Sequence and analysis of chromosome 5 of the plant Arabidopsis thaliana.</title>
        <authorList>
            <person name="Tabata S."/>
            <person name="Kaneko T."/>
            <person name="Nakamura Y."/>
            <person name="Kotani H."/>
            <person name="Kato T."/>
            <person name="Asamizu E."/>
            <person name="Miyajima N."/>
            <person name="Sasamoto S."/>
            <person name="Kimura T."/>
            <person name="Hosouchi T."/>
            <person name="Kawashima K."/>
            <person name="Kohara M."/>
            <person name="Matsumoto M."/>
            <person name="Matsuno A."/>
            <person name="Muraki A."/>
            <person name="Nakayama S."/>
            <person name="Nakazaki N."/>
            <person name="Naruo K."/>
            <person name="Okumura S."/>
            <person name="Shinpo S."/>
            <person name="Takeuchi C."/>
            <person name="Wada T."/>
            <person name="Watanabe A."/>
            <person name="Yamada M."/>
            <person name="Yasuda M."/>
            <person name="Sato S."/>
            <person name="de la Bastide M."/>
            <person name="Huang E."/>
            <person name="Spiegel L."/>
            <person name="Gnoj L."/>
            <person name="O'Shaughnessy A."/>
            <person name="Preston R."/>
            <person name="Habermann K."/>
            <person name="Murray J."/>
            <person name="Johnson D."/>
            <person name="Rohlfing T."/>
            <person name="Nelson J."/>
            <person name="Stoneking T."/>
            <person name="Pepin K."/>
            <person name="Spieth J."/>
            <person name="Sekhon M."/>
            <person name="Armstrong J."/>
            <person name="Becker M."/>
            <person name="Belter E."/>
            <person name="Cordum H."/>
            <person name="Cordes M."/>
            <person name="Courtney L."/>
            <person name="Courtney W."/>
            <person name="Dante M."/>
            <person name="Du H."/>
            <person name="Edwards J."/>
            <person name="Fryman J."/>
            <person name="Haakensen B."/>
            <person name="Lamar E."/>
            <person name="Latreille P."/>
            <person name="Leonard S."/>
            <person name="Meyer R."/>
            <person name="Mulvaney E."/>
            <person name="Ozersky P."/>
            <person name="Riley A."/>
            <person name="Strowmatt C."/>
            <person name="Wagner-McPherson C."/>
            <person name="Wollam A."/>
            <person name="Yoakum M."/>
            <person name="Bell M."/>
            <person name="Dedhia N."/>
            <person name="Parnell L."/>
            <person name="Shah R."/>
            <person name="Rodriguez M."/>
            <person name="Hoon See L."/>
            <person name="Vil D."/>
            <person name="Baker J."/>
            <person name="Kirchoff K."/>
            <person name="Toth K."/>
            <person name="King L."/>
            <person name="Bahret A."/>
            <person name="Miller B."/>
            <person name="Marra M.A."/>
            <person name="Martienssen R."/>
            <person name="McCombie W.R."/>
            <person name="Wilson R.K."/>
            <person name="Murphy G."/>
            <person name="Bancroft I."/>
            <person name="Volckaert G."/>
            <person name="Wambutt R."/>
            <person name="Duesterhoeft A."/>
            <person name="Stiekema W."/>
            <person name="Pohl T."/>
            <person name="Entian K.-D."/>
            <person name="Terryn N."/>
            <person name="Hartley N."/>
            <person name="Bent E."/>
            <person name="Johnson S."/>
            <person name="Langham S.-A."/>
            <person name="McCullagh B."/>
            <person name="Robben J."/>
            <person name="Grymonprez B."/>
            <person name="Zimmermann W."/>
            <person name="Ramsperger U."/>
            <person name="Wedler H."/>
            <person name="Balke K."/>
            <person name="Wedler E."/>
            <person name="Peters S."/>
            <person name="van Staveren M."/>
            <person name="Dirkse W."/>
            <person name="Mooijman P."/>
            <person name="Klein Lankhorst R."/>
            <person name="Weitzenegger T."/>
            <person name="Bothe G."/>
            <person name="Rose M."/>
            <person name="Hauf J."/>
            <person name="Berneiser S."/>
            <person name="Hempel S."/>
            <person name="Feldpausch M."/>
            <person name="Lamberth S."/>
            <person name="Villarroel R."/>
            <person name="Gielen J."/>
            <person name="Ardiles W."/>
            <person name="Bents O."/>
            <person name="Lemcke K."/>
            <person name="Kolesov G."/>
            <person name="Mayer K.F.X."/>
            <person name="Rudd S."/>
            <person name="Schoof H."/>
            <person name="Schueller C."/>
            <person name="Zaccaria P."/>
            <person name="Mewes H.-W."/>
            <person name="Bevan M."/>
            <person name="Fransz P.F."/>
        </authorList>
    </citation>
    <scope>NUCLEOTIDE SEQUENCE [LARGE SCALE GENOMIC DNA]</scope>
    <source>
        <strain>cv. Columbia</strain>
    </source>
</reference>
<reference key="2">
    <citation type="journal article" date="2017" name="Plant J.">
        <title>Araport11: a complete reannotation of the Arabidopsis thaliana reference genome.</title>
        <authorList>
            <person name="Cheng C.Y."/>
            <person name="Krishnakumar V."/>
            <person name="Chan A.P."/>
            <person name="Thibaud-Nissen F."/>
            <person name="Schobel S."/>
            <person name="Town C.D."/>
        </authorList>
    </citation>
    <scope>GENOME REANNOTATION</scope>
    <source>
        <strain>cv. Columbia</strain>
    </source>
</reference>
<reference key="3">
    <citation type="submission" date="2004-06" db="EMBL/GenBank/DDBJ databases">
        <title>Arabidopsis ORF clones.</title>
        <authorList>
            <person name="Cheuk R.F."/>
            <person name="Chen H."/>
            <person name="Kim C.J."/>
            <person name="Shinn P."/>
            <person name="Ecker J.R."/>
        </authorList>
    </citation>
    <scope>NUCLEOTIDE SEQUENCE [LARGE SCALE MRNA]</scope>
    <source>
        <strain>cv. Columbia</strain>
    </source>
</reference>
<reference key="4">
    <citation type="submission" date="2006-07" db="EMBL/GenBank/DDBJ databases">
        <title>Large-scale analysis of RIKEN Arabidopsis full-length (RAFL) cDNAs.</title>
        <authorList>
            <person name="Totoki Y."/>
            <person name="Seki M."/>
            <person name="Ishida J."/>
            <person name="Nakajima M."/>
            <person name="Enju A."/>
            <person name="Kamiya A."/>
            <person name="Narusaka M."/>
            <person name="Shin-i T."/>
            <person name="Nakagawa M."/>
            <person name="Sakamoto N."/>
            <person name="Oishi K."/>
            <person name="Kohara Y."/>
            <person name="Kobayashi M."/>
            <person name="Toyoda A."/>
            <person name="Sakaki Y."/>
            <person name="Sakurai T."/>
            <person name="Iida K."/>
            <person name="Akiyama K."/>
            <person name="Satou M."/>
            <person name="Toyoda T."/>
            <person name="Konagaya A."/>
            <person name="Carninci P."/>
            <person name="Kawai J."/>
            <person name="Hayashizaki Y."/>
            <person name="Shinozaki K."/>
        </authorList>
    </citation>
    <scope>NUCLEOTIDE SEQUENCE [LARGE SCALE MRNA]</scope>
    <source>
        <strain>cv. Columbia</strain>
    </source>
</reference>
<reference key="5">
    <citation type="journal article" date="2004" name="Plant Physiol.">
        <title>Genome-wide analysis of the cyclin family in Arabidopsis and comparative phylogenetic analysis of plant cyclin-like proteins.</title>
        <authorList>
            <person name="Wang G."/>
            <person name="Kong H."/>
            <person name="Sun Y."/>
            <person name="Zhang X."/>
            <person name="Zhang W."/>
            <person name="Altman N."/>
            <person name="dePamphilis C.W."/>
            <person name="Ma H."/>
        </authorList>
    </citation>
    <scope>GENE FAMILY</scope>
    <scope>NOMENCLATURE</scope>
</reference>
<reference key="6">
    <citation type="journal article" date="2006" name="Plant Cell Rep.">
        <title>A distinct type of cyclin D, CYCD4;2, involved in the activation of cell division in Arabidopsis.</title>
        <authorList>
            <person name="Kono A."/>
            <person name="Ohno R."/>
            <person name="Umeda-Hara C."/>
            <person name="Uchimiya H."/>
            <person name="Umeda M."/>
        </authorList>
    </citation>
    <scope>FUNCTION</scope>
    <scope>DEVELOPMENTAL STAGE</scope>
    <scope>INTERACTION WITH CDKA-1</scope>
</reference>